<gene>
    <name evidence="1" type="primary">rplN</name>
    <name type="ordered locus">BT0488</name>
</gene>
<sequence length="122" mass="13350">MVQMQTYLTVADNTGGKIAECIKVLGGSKKRSARVGDIIVIAVKQAIPNSPIKKGEVHKAVVVRTSKEIRRKNGTYVRFDDNACVILDANLNPRGKRVFGPVARELRDANFMKVVSLASEVI</sequence>
<name>RL14_BORT9</name>
<reference key="1">
    <citation type="submission" date="2004-12" db="EMBL/GenBank/DDBJ databases">
        <title>The genome sequence of Borrelia hermsii and Borrelia turicatae: comparative analysis of two agents of endemic N. America relapsing fever.</title>
        <authorList>
            <person name="Porcella S.F."/>
            <person name="Raffel S.J."/>
            <person name="Schrumpf M.E."/>
            <person name="Montgomery B."/>
            <person name="Smith T."/>
            <person name="Schwan T.G."/>
        </authorList>
    </citation>
    <scope>NUCLEOTIDE SEQUENCE [LARGE SCALE GENOMIC DNA]</scope>
    <source>
        <strain>91E135</strain>
    </source>
</reference>
<protein>
    <recommendedName>
        <fullName evidence="1">Large ribosomal subunit protein uL14</fullName>
    </recommendedName>
    <alternativeName>
        <fullName evidence="2">50S ribosomal protein L14</fullName>
    </alternativeName>
</protein>
<proteinExistence type="inferred from homology"/>
<organism>
    <name type="scientific">Borrelia turicatae (strain 91E135)</name>
    <dbReference type="NCBI Taxonomy" id="314724"/>
    <lineage>
        <taxon>Bacteria</taxon>
        <taxon>Pseudomonadati</taxon>
        <taxon>Spirochaetota</taxon>
        <taxon>Spirochaetia</taxon>
        <taxon>Spirochaetales</taxon>
        <taxon>Borreliaceae</taxon>
        <taxon>Borrelia</taxon>
    </lineage>
</organism>
<keyword id="KW-1185">Reference proteome</keyword>
<keyword id="KW-0687">Ribonucleoprotein</keyword>
<keyword id="KW-0689">Ribosomal protein</keyword>
<keyword id="KW-0694">RNA-binding</keyword>
<keyword id="KW-0699">rRNA-binding</keyword>
<feature type="chain" id="PRO_1000166901" description="Large ribosomal subunit protein uL14">
    <location>
        <begin position="1"/>
        <end position="122"/>
    </location>
</feature>
<comment type="function">
    <text evidence="1">Binds to 23S rRNA. Forms part of two intersubunit bridges in the 70S ribosome.</text>
</comment>
<comment type="subunit">
    <text evidence="1">Part of the 50S ribosomal subunit. Forms a cluster with proteins L3 and L19. In the 70S ribosome, L14 and L19 interact and together make contacts with the 16S rRNA in bridges B5 and B8.</text>
</comment>
<comment type="similarity">
    <text evidence="1">Belongs to the universal ribosomal protein uL14 family.</text>
</comment>
<accession>A1QZS4</accession>
<evidence type="ECO:0000255" key="1">
    <source>
        <dbReference type="HAMAP-Rule" id="MF_01367"/>
    </source>
</evidence>
<evidence type="ECO:0000305" key="2"/>
<dbReference type="EMBL" id="CP000049">
    <property type="protein sequence ID" value="AAX17816.1"/>
    <property type="molecule type" value="Genomic_DNA"/>
</dbReference>
<dbReference type="RefSeq" id="WP_011772435.1">
    <property type="nucleotide sequence ID" value="NZ_CP073176.1"/>
</dbReference>
<dbReference type="SMR" id="A1QZS4"/>
<dbReference type="KEGG" id="btu:BT0488"/>
<dbReference type="eggNOG" id="COG0093">
    <property type="taxonomic scope" value="Bacteria"/>
</dbReference>
<dbReference type="HOGENOM" id="CLU_095071_2_1_12"/>
<dbReference type="Proteomes" id="UP000001205">
    <property type="component" value="Chromosome"/>
</dbReference>
<dbReference type="GO" id="GO:0022625">
    <property type="term" value="C:cytosolic large ribosomal subunit"/>
    <property type="evidence" value="ECO:0007669"/>
    <property type="project" value="TreeGrafter"/>
</dbReference>
<dbReference type="GO" id="GO:0070180">
    <property type="term" value="F:large ribosomal subunit rRNA binding"/>
    <property type="evidence" value="ECO:0007669"/>
    <property type="project" value="TreeGrafter"/>
</dbReference>
<dbReference type="GO" id="GO:0003735">
    <property type="term" value="F:structural constituent of ribosome"/>
    <property type="evidence" value="ECO:0007669"/>
    <property type="project" value="InterPro"/>
</dbReference>
<dbReference type="GO" id="GO:0006412">
    <property type="term" value="P:translation"/>
    <property type="evidence" value="ECO:0007669"/>
    <property type="project" value="UniProtKB-UniRule"/>
</dbReference>
<dbReference type="CDD" id="cd00337">
    <property type="entry name" value="Ribosomal_uL14"/>
    <property type="match status" value="1"/>
</dbReference>
<dbReference type="FunFam" id="2.40.150.20:FF:000001">
    <property type="entry name" value="50S ribosomal protein L14"/>
    <property type="match status" value="1"/>
</dbReference>
<dbReference type="Gene3D" id="2.40.150.20">
    <property type="entry name" value="Ribosomal protein L14"/>
    <property type="match status" value="1"/>
</dbReference>
<dbReference type="HAMAP" id="MF_01367">
    <property type="entry name" value="Ribosomal_uL14"/>
    <property type="match status" value="1"/>
</dbReference>
<dbReference type="InterPro" id="IPR000218">
    <property type="entry name" value="Ribosomal_uL14"/>
</dbReference>
<dbReference type="InterPro" id="IPR005745">
    <property type="entry name" value="Ribosomal_uL14_bac-type"/>
</dbReference>
<dbReference type="InterPro" id="IPR019972">
    <property type="entry name" value="Ribosomal_uL14_CS"/>
</dbReference>
<dbReference type="InterPro" id="IPR036853">
    <property type="entry name" value="Ribosomal_uL14_sf"/>
</dbReference>
<dbReference type="NCBIfam" id="TIGR01067">
    <property type="entry name" value="rplN_bact"/>
    <property type="match status" value="1"/>
</dbReference>
<dbReference type="PANTHER" id="PTHR11761">
    <property type="entry name" value="50S/60S RIBOSOMAL PROTEIN L14/L23"/>
    <property type="match status" value="1"/>
</dbReference>
<dbReference type="PANTHER" id="PTHR11761:SF3">
    <property type="entry name" value="LARGE RIBOSOMAL SUBUNIT PROTEIN UL14M"/>
    <property type="match status" value="1"/>
</dbReference>
<dbReference type="Pfam" id="PF00238">
    <property type="entry name" value="Ribosomal_L14"/>
    <property type="match status" value="1"/>
</dbReference>
<dbReference type="SMART" id="SM01374">
    <property type="entry name" value="Ribosomal_L14"/>
    <property type="match status" value="1"/>
</dbReference>
<dbReference type="SUPFAM" id="SSF50193">
    <property type="entry name" value="Ribosomal protein L14"/>
    <property type="match status" value="1"/>
</dbReference>
<dbReference type="PROSITE" id="PS00049">
    <property type="entry name" value="RIBOSOMAL_L14"/>
    <property type="match status" value="1"/>
</dbReference>